<name>F16PA_CHLL3</name>
<reference key="1">
    <citation type="submission" date="2005-08" db="EMBL/GenBank/DDBJ databases">
        <title>Complete sequence of Pelodictyon luteolum DSM 273.</title>
        <authorList>
            <consortium name="US DOE Joint Genome Institute"/>
            <person name="Copeland A."/>
            <person name="Lucas S."/>
            <person name="Lapidus A."/>
            <person name="Barry K."/>
            <person name="Detter J.C."/>
            <person name="Glavina T."/>
            <person name="Hammon N."/>
            <person name="Israni S."/>
            <person name="Pitluck S."/>
            <person name="Bryant D."/>
            <person name="Schmutz J."/>
            <person name="Larimer F."/>
            <person name="Land M."/>
            <person name="Kyrpides N."/>
            <person name="Ivanova N."/>
            <person name="Richardson P."/>
        </authorList>
    </citation>
    <scope>NUCLEOTIDE SEQUENCE [LARGE SCALE GENOMIC DNA]</scope>
    <source>
        <strain>DSM 273 / BCRC 81028 / 2530</strain>
    </source>
</reference>
<sequence>MSQLITIERHILEQQKNFPEATGELTDLLSDVAFAAKLVRREVVRAGLVDILGFAGSTNVQGEEVKKLDLFANDKIINAIGQHGRFAIMGSEENEGIIIPPKNETGSYALLFDPLDGSSNIDVNVSVGTIFSIYRIKSSDPGNASISDCLQKGSEQVAAGYVIYGSSVVMVYTTGHGVHGFTYDPTIGEFLLSHENITTPGSGKYYSINEGSYAQFNDGTKRYLDYIKEEDPATGRPYSTRYIGSLVADFHRNLLTGGVFVYPPTTKHPSGKLRLMYEANPLAFICEQAGGRATDGHRRILDIDPSELHQRTPLYIGSMADVKVAEEFEQGIR</sequence>
<proteinExistence type="inferred from homology"/>
<dbReference type="EC" id="3.1.3.11" evidence="1"/>
<dbReference type="EMBL" id="CP000096">
    <property type="protein sequence ID" value="ABB23349.1"/>
    <property type="molecule type" value="Genomic_DNA"/>
</dbReference>
<dbReference type="RefSeq" id="WP_011357224.1">
    <property type="nucleotide sequence ID" value="NC_007512.1"/>
</dbReference>
<dbReference type="SMR" id="Q3B5N2"/>
<dbReference type="STRING" id="319225.Plut_0461"/>
<dbReference type="KEGG" id="plt:Plut_0461"/>
<dbReference type="eggNOG" id="COG0158">
    <property type="taxonomic scope" value="Bacteria"/>
</dbReference>
<dbReference type="HOGENOM" id="CLU_039977_2_2_10"/>
<dbReference type="OrthoDB" id="9806756at2"/>
<dbReference type="UniPathway" id="UPA00116"/>
<dbReference type="Proteomes" id="UP000002709">
    <property type="component" value="Chromosome"/>
</dbReference>
<dbReference type="GO" id="GO:0005829">
    <property type="term" value="C:cytosol"/>
    <property type="evidence" value="ECO:0007669"/>
    <property type="project" value="TreeGrafter"/>
</dbReference>
<dbReference type="GO" id="GO:0042132">
    <property type="term" value="F:fructose 1,6-bisphosphate 1-phosphatase activity"/>
    <property type="evidence" value="ECO:0007669"/>
    <property type="project" value="UniProtKB-UniRule"/>
</dbReference>
<dbReference type="GO" id="GO:0000287">
    <property type="term" value="F:magnesium ion binding"/>
    <property type="evidence" value="ECO:0007669"/>
    <property type="project" value="UniProtKB-UniRule"/>
</dbReference>
<dbReference type="GO" id="GO:0030388">
    <property type="term" value="P:fructose 1,6-bisphosphate metabolic process"/>
    <property type="evidence" value="ECO:0007669"/>
    <property type="project" value="TreeGrafter"/>
</dbReference>
<dbReference type="GO" id="GO:0006002">
    <property type="term" value="P:fructose 6-phosphate metabolic process"/>
    <property type="evidence" value="ECO:0007669"/>
    <property type="project" value="TreeGrafter"/>
</dbReference>
<dbReference type="GO" id="GO:0006000">
    <property type="term" value="P:fructose metabolic process"/>
    <property type="evidence" value="ECO:0007669"/>
    <property type="project" value="TreeGrafter"/>
</dbReference>
<dbReference type="GO" id="GO:0006094">
    <property type="term" value="P:gluconeogenesis"/>
    <property type="evidence" value="ECO:0007669"/>
    <property type="project" value="UniProtKB-UniRule"/>
</dbReference>
<dbReference type="GO" id="GO:0019253">
    <property type="term" value="P:reductive pentose-phosphate cycle"/>
    <property type="evidence" value="ECO:0007669"/>
    <property type="project" value="UniProtKB-UniRule"/>
</dbReference>
<dbReference type="GO" id="GO:0005986">
    <property type="term" value="P:sucrose biosynthetic process"/>
    <property type="evidence" value="ECO:0007669"/>
    <property type="project" value="TreeGrafter"/>
</dbReference>
<dbReference type="CDD" id="cd00354">
    <property type="entry name" value="FBPase"/>
    <property type="match status" value="1"/>
</dbReference>
<dbReference type="FunFam" id="3.30.540.10:FF:000002">
    <property type="entry name" value="Fructose-1,6-bisphosphatase class 1"/>
    <property type="match status" value="1"/>
</dbReference>
<dbReference type="FunFam" id="3.40.190.80:FF:000001">
    <property type="entry name" value="Fructose-1,6-bisphosphatase class 1"/>
    <property type="match status" value="1"/>
</dbReference>
<dbReference type="Gene3D" id="3.40.190.80">
    <property type="match status" value="1"/>
</dbReference>
<dbReference type="Gene3D" id="3.30.540.10">
    <property type="entry name" value="Fructose-1,6-Bisphosphatase, subunit A, domain 1"/>
    <property type="match status" value="1"/>
</dbReference>
<dbReference type="HAMAP" id="MF_01855">
    <property type="entry name" value="FBPase_class1"/>
    <property type="match status" value="1"/>
</dbReference>
<dbReference type="InterPro" id="IPR044015">
    <property type="entry name" value="FBPase_C_dom"/>
</dbReference>
<dbReference type="InterPro" id="IPR000146">
    <property type="entry name" value="FBPase_class-1"/>
</dbReference>
<dbReference type="InterPro" id="IPR033391">
    <property type="entry name" value="FBPase_N"/>
</dbReference>
<dbReference type="InterPro" id="IPR028343">
    <property type="entry name" value="FBPtase"/>
</dbReference>
<dbReference type="NCBIfam" id="NF006778">
    <property type="entry name" value="PRK09293.1-1"/>
    <property type="match status" value="1"/>
</dbReference>
<dbReference type="PANTHER" id="PTHR11556">
    <property type="entry name" value="FRUCTOSE-1,6-BISPHOSPHATASE-RELATED"/>
    <property type="match status" value="1"/>
</dbReference>
<dbReference type="PANTHER" id="PTHR11556:SF35">
    <property type="entry name" value="SEDOHEPTULOSE-1,7-BISPHOSPHATASE, CHLOROPLASTIC"/>
    <property type="match status" value="1"/>
</dbReference>
<dbReference type="Pfam" id="PF00316">
    <property type="entry name" value="FBPase"/>
    <property type="match status" value="1"/>
</dbReference>
<dbReference type="Pfam" id="PF18913">
    <property type="entry name" value="FBPase_C"/>
    <property type="match status" value="1"/>
</dbReference>
<dbReference type="PIRSF" id="PIRSF500210">
    <property type="entry name" value="FBPtase"/>
    <property type="match status" value="1"/>
</dbReference>
<dbReference type="PIRSF" id="PIRSF000904">
    <property type="entry name" value="FBPtase_SBPase"/>
    <property type="match status" value="1"/>
</dbReference>
<dbReference type="PRINTS" id="PR00115">
    <property type="entry name" value="F16BPHPHTASE"/>
</dbReference>
<dbReference type="SUPFAM" id="SSF56655">
    <property type="entry name" value="Carbohydrate phosphatase"/>
    <property type="match status" value="1"/>
</dbReference>
<organism>
    <name type="scientific">Chlorobium luteolum (strain DSM 273 / BCRC 81028 / 2530)</name>
    <name type="common">Pelodictyon luteolum</name>
    <dbReference type="NCBI Taxonomy" id="319225"/>
    <lineage>
        <taxon>Bacteria</taxon>
        <taxon>Pseudomonadati</taxon>
        <taxon>Chlorobiota</taxon>
        <taxon>Chlorobiia</taxon>
        <taxon>Chlorobiales</taxon>
        <taxon>Chlorobiaceae</taxon>
        <taxon>Chlorobium/Pelodictyon group</taxon>
        <taxon>Pelodictyon</taxon>
    </lineage>
</organism>
<protein>
    <recommendedName>
        <fullName evidence="1">Fructose-1,6-bisphosphatase class 1</fullName>
        <shortName evidence="1">FBPase class 1</shortName>
        <ecNumber evidence="1">3.1.3.11</ecNumber>
    </recommendedName>
    <alternativeName>
        <fullName evidence="1">D-fructose-1,6-bisphosphate 1-phosphohydrolase class 1</fullName>
    </alternativeName>
</protein>
<evidence type="ECO:0000255" key="1">
    <source>
        <dbReference type="HAMAP-Rule" id="MF_01855"/>
    </source>
</evidence>
<keyword id="KW-0113">Calvin cycle</keyword>
<keyword id="KW-0119">Carbohydrate metabolism</keyword>
<keyword id="KW-0963">Cytoplasm</keyword>
<keyword id="KW-0378">Hydrolase</keyword>
<keyword id="KW-0460">Magnesium</keyword>
<keyword id="KW-0479">Metal-binding</keyword>
<keyword id="KW-1185">Reference proteome</keyword>
<accession>Q3B5N2</accession>
<comment type="catalytic activity">
    <reaction evidence="1">
        <text>beta-D-fructose 1,6-bisphosphate + H2O = beta-D-fructose 6-phosphate + phosphate</text>
        <dbReference type="Rhea" id="RHEA:11064"/>
        <dbReference type="ChEBI" id="CHEBI:15377"/>
        <dbReference type="ChEBI" id="CHEBI:32966"/>
        <dbReference type="ChEBI" id="CHEBI:43474"/>
        <dbReference type="ChEBI" id="CHEBI:57634"/>
        <dbReference type="EC" id="3.1.3.11"/>
    </reaction>
</comment>
<comment type="cofactor">
    <cofactor evidence="1">
        <name>Mg(2+)</name>
        <dbReference type="ChEBI" id="CHEBI:18420"/>
    </cofactor>
    <text evidence="1">Binds 2 magnesium ions per subunit.</text>
</comment>
<comment type="pathway">
    <text evidence="1">Carbohydrate biosynthesis; Calvin cycle.</text>
</comment>
<comment type="subunit">
    <text evidence="1">Homotetramer.</text>
</comment>
<comment type="subcellular location">
    <subcellularLocation>
        <location evidence="1">Cytoplasm</location>
    </subcellularLocation>
</comment>
<comment type="similarity">
    <text evidence="1">Belongs to the FBPase class 1 family.</text>
</comment>
<feature type="chain" id="PRO_0000364624" description="Fructose-1,6-bisphosphatase class 1">
    <location>
        <begin position="1"/>
        <end position="333"/>
    </location>
</feature>
<feature type="binding site" evidence="1">
    <location>
        <position position="92"/>
    </location>
    <ligand>
        <name>Mg(2+)</name>
        <dbReference type="ChEBI" id="CHEBI:18420"/>
        <label>1</label>
    </ligand>
</feature>
<feature type="binding site" evidence="1">
    <location>
        <position position="113"/>
    </location>
    <ligand>
        <name>Mg(2+)</name>
        <dbReference type="ChEBI" id="CHEBI:18420"/>
        <label>1</label>
    </ligand>
</feature>
<feature type="binding site" evidence="1">
    <location>
        <position position="113"/>
    </location>
    <ligand>
        <name>Mg(2+)</name>
        <dbReference type="ChEBI" id="CHEBI:18420"/>
        <label>2</label>
    </ligand>
</feature>
<feature type="binding site" evidence="1">
    <location>
        <position position="115"/>
    </location>
    <ligand>
        <name>Mg(2+)</name>
        <dbReference type="ChEBI" id="CHEBI:18420"/>
        <label>1</label>
    </ligand>
</feature>
<feature type="binding site" evidence="1">
    <location>
        <begin position="116"/>
        <end position="119"/>
    </location>
    <ligand>
        <name>substrate</name>
    </ligand>
</feature>
<feature type="binding site" evidence="1">
    <location>
        <position position="116"/>
    </location>
    <ligand>
        <name>Mg(2+)</name>
        <dbReference type="ChEBI" id="CHEBI:18420"/>
        <label>2</label>
    </ligand>
</feature>
<feature type="binding site" evidence="1">
    <location>
        <position position="209"/>
    </location>
    <ligand>
        <name>substrate</name>
    </ligand>
</feature>
<feature type="binding site" evidence="1">
    <location>
        <position position="242"/>
    </location>
    <ligand>
        <name>substrate</name>
    </ligand>
</feature>
<feature type="binding site" evidence="1">
    <location>
        <position position="272"/>
    </location>
    <ligand>
        <name>substrate</name>
    </ligand>
</feature>
<feature type="binding site" evidence="1">
    <location>
        <position position="278"/>
    </location>
    <ligand>
        <name>Mg(2+)</name>
        <dbReference type="ChEBI" id="CHEBI:18420"/>
        <label>2</label>
    </ligand>
</feature>
<gene>
    <name evidence="1" type="primary">fbp</name>
    <name type="ordered locus">Plut_0461</name>
</gene>